<feature type="chain" id="PRO_1000018977" description="Bifunctional purine biosynthesis protein PurH">
    <location>
        <begin position="1"/>
        <end position="513"/>
    </location>
</feature>
<feature type="domain" description="MGS-like" evidence="2">
    <location>
        <begin position="1"/>
        <end position="146"/>
    </location>
</feature>
<evidence type="ECO:0000255" key="1">
    <source>
        <dbReference type="HAMAP-Rule" id="MF_00139"/>
    </source>
</evidence>
<evidence type="ECO:0000255" key="2">
    <source>
        <dbReference type="PROSITE-ProRule" id="PRU01202"/>
    </source>
</evidence>
<keyword id="KW-0378">Hydrolase</keyword>
<keyword id="KW-0511">Multifunctional enzyme</keyword>
<keyword id="KW-0658">Purine biosynthesis</keyword>
<keyword id="KW-1185">Reference proteome</keyword>
<keyword id="KW-0808">Transferase</keyword>
<proteinExistence type="inferred from homology"/>
<sequence>MPRFALLSVSDKTGLVDFARQLVDRFQFQIVSSGGTAKQLLEAGIPVTKVAEHTGSPEILGGRVKTLHPRIHGGILARRDREEDQADLAANNIQPFDLVVVNLYPFEATIARPEVTLADAIEQIDIGGPAMVRASAKNHAHLTILTNPSQYEPYLTALADGEGQIPLAFRQQCALAAFQHTAAYDAAIATYLAEQFEATSDRLQLSAQPVQVLRYGENPHQAATWYQTGATASGWAAAQQLQGKELSYNNLVDLEAARQIIAEFPADGPAAAAILKHNNPCGVATAEALSDAYQKAFDADSVSAFGGIVALNRAIDAATATAMTGTFLECIVAPSVEPAAAEILAAKKNLRVLTLADFNSGPQQTVRSIAGGFLVQDSDDQLETVDAWQVVTEQQPSEADWQELLFAWKVVKHVKSNAIAVTANGVTLGIGAGQMNRVGSVKIALEQAGDRAQGAILASDGFFPFDDSVRTAAAAGIRAIVQPGGSLRDADSIAAANELGLVMVFTGTRHFLH</sequence>
<dbReference type="EC" id="2.1.2.3" evidence="1"/>
<dbReference type="EC" id="3.5.4.10" evidence="1"/>
<dbReference type="EMBL" id="CP000100">
    <property type="protein sequence ID" value="ABB56428.1"/>
    <property type="molecule type" value="Genomic_DNA"/>
</dbReference>
<dbReference type="RefSeq" id="WP_011377564.1">
    <property type="nucleotide sequence ID" value="NZ_JACJTX010000002.1"/>
</dbReference>
<dbReference type="SMR" id="Q31R91"/>
<dbReference type="STRING" id="1140.Synpcc7942_0396"/>
<dbReference type="PaxDb" id="1140-Synpcc7942_0396"/>
<dbReference type="GeneID" id="72429216"/>
<dbReference type="KEGG" id="syf:Synpcc7942_0396"/>
<dbReference type="eggNOG" id="COG0138">
    <property type="taxonomic scope" value="Bacteria"/>
</dbReference>
<dbReference type="HOGENOM" id="CLU_016316_5_2_3"/>
<dbReference type="OrthoDB" id="9802065at2"/>
<dbReference type="BioCyc" id="SYNEL:SYNPCC7942_0396-MONOMER"/>
<dbReference type="UniPathway" id="UPA00074">
    <property type="reaction ID" value="UER00133"/>
</dbReference>
<dbReference type="UniPathway" id="UPA00074">
    <property type="reaction ID" value="UER00135"/>
</dbReference>
<dbReference type="Proteomes" id="UP000889800">
    <property type="component" value="Chromosome"/>
</dbReference>
<dbReference type="GO" id="GO:0005829">
    <property type="term" value="C:cytosol"/>
    <property type="evidence" value="ECO:0007669"/>
    <property type="project" value="TreeGrafter"/>
</dbReference>
<dbReference type="GO" id="GO:0003937">
    <property type="term" value="F:IMP cyclohydrolase activity"/>
    <property type="evidence" value="ECO:0007669"/>
    <property type="project" value="UniProtKB-UniRule"/>
</dbReference>
<dbReference type="GO" id="GO:0004643">
    <property type="term" value="F:phosphoribosylaminoimidazolecarboxamide formyltransferase activity"/>
    <property type="evidence" value="ECO:0007669"/>
    <property type="project" value="UniProtKB-UniRule"/>
</dbReference>
<dbReference type="GO" id="GO:0006189">
    <property type="term" value="P:'de novo' IMP biosynthetic process"/>
    <property type="evidence" value="ECO:0007669"/>
    <property type="project" value="UniProtKB-UniRule"/>
</dbReference>
<dbReference type="CDD" id="cd01421">
    <property type="entry name" value="IMPCH"/>
    <property type="match status" value="1"/>
</dbReference>
<dbReference type="FunFam" id="3.40.140.20:FF:000001">
    <property type="entry name" value="Bifunctional purine biosynthesis protein PurH"/>
    <property type="match status" value="1"/>
</dbReference>
<dbReference type="FunFam" id="3.40.50.1380:FF:000001">
    <property type="entry name" value="Bifunctional purine biosynthesis protein PurH"/>
    <property type="match status" value="1"/>
</dbReference>
<dbReference type="Gene3D" id="3.40.140.20">
    <property type="match status" value="2"/>
</dbReference>
<dbReference type="Gene3D" id="3.40.50.1380">
    <property type="entry name" value="Methylglyoxal synthase-like domain"/>
    <property type="match status" value="1"/>
</dbReference>
<dbReference type="HAMAP" id="MF_00139">
    <property type="entry name" value="PurH"/>
    <property type="match status" value="1"/>
</dbReference>
<dbReference type="InterPro" id="IPR024051">
    <property type="entry name" value="AICAR_Tfase_dup_dom_sf"/>
</dbReference>
<dbReference type="InterPro" id="IPR016193">
    <property type="entry name" value="Cytidine_deaminase-like"/>
</dbReference>
<dbReference type="InterPro" id="IPR011607">
    <property type="entry name" value="MGS-like_dom"/>
</dbReference>
<dbReference type="InterPro" id="IPR036914">
    <property type="entry name" value="MGS-like_dom_sf"/>
</dbReference>
<dbReference type="InterPro" id="IPR002695">
    <property type="entry name" value="PurH-like"/>
</dbReference>
<dbReference type="NCBIfam" id="NF002049">
    <property type="entry name" value="PRK00881.1"/>
    <property type="match status" value="1"/>
</dbReference>
<dbReference type="NCBIfam" id="TIGR00355">
    <property type="entry name" value="purH"/>
    <property type="match status" value="1"/>
</dbReference>
<dbReference type="PANTHER" id="PTHR11692:SF0">
    <property type="entry name" value="BIFUNCTIONAL PURINE BIOSYNTHESIS PROTEIN ATIC"/>
    <property type="match status" value="1"/>
</dbReference>
<dbReference type="PANTHER" id="PTHR11692">
    <property type="entry name" value="BIFUNCTIONAL PURINE BIOSYNTHESIS PROTEIN PURH"/>
    <property type="match status" value="1"/>
</dbReference>
<dbReference type="Pfam" id="PF01808">
    <property type="entry name" value="AICARFT_IMPCHas"/>
    <property type="match status" value="1"/>
</dbReference>
<dbReference type="Pfam" id="PF02142">
    <property type="entry name" value="MGS"/>
    <property type="match status" value="1"/>
</dbReference>
<dbReference type="PIRSF" id="PIRSF000414">
    <property type="entry name" value="AICARFT_IMPCHas"/>
    <property type="match status" value="1"/>
</dbReference>
<dbReference type="SMART" id="SM00798">
    <property type="entry name" value="AICARFT_IMPCHas"/>
    <property type="match status" value="1"/>
</dbReference>
<dbReference type="SMART" id="SM00851">
    <property type="entry name" value="MGS"/>
    <property type="match status" value="1"/>
</dbReference>
<dbReference type="SUPFAM" id="SSF53927">
    <property type="entry name" value="Cytidine deaminase-like"/>
    <property type="match status" value="1"/>
</dbReference>
<dbReference type="SUPFAM" id="SSF52335">
    <property type="entry name" value="Methylglyoxal synthase-like"/>
    <property type="match status" value="1"/>
</dbReference>
<dbReference type="PROSITE" id="PS51855">
    <property type="entry name" value="MGS"/>
    <property type="match status" value="1"/>
</dbReference>
<gene>
    <name evidence="1" type="primary">purH</name>
    <name type="ordered locus">Synpcc7942_0396</name>
</gene>
<accession>Q31R91</accession>
<protein>
    <recommendedName>
        <fullName evidence="1">Bifunctional purine biosynthesis protein PurH</fullName>
    </recommendedName>
    <domain>
        <recommendedName>
            <fullName evidence="1">Phosphoribosylaminoimidazolecarboxamide formyltransferase</fullName>
            <ecNumber evidence="1">2.1.2.3</ecNumber>
        </recommendedName>
        <alternativeName>
            <fullName evidence="1">AICAR transformylase</fullName>
        </alternativeName>
    </domain>
    <domain>
        <recommendedName>
            <fullName evidence="1">IMP cyclohydrolase</fullName>
            <ecNumber evidence="1">3.5.4.10</ecNumber>
        </recommendedName>
        <alternativeName>
            <fullName evidence="1">ATIC</fullName>
        </alternativeName>
        <alternativeName>
            <fullName evidence="1">IMP synthase</fullName>
        </alternativeName>
        <alternativeName>
            <fullName evidence="1">Inosinicase</fullName>
        </alternativeName>
    </domain>
</protein>
<name>PUR9_SYNE7</name>
<organism>
    <name type="scientific">Synechococcus elongatus (strain ATCC 33912 / PCC 7942 / FACHB-805)</name>
    <name type="common">Anacystis nidulans R2</name>
    <dbReference type="NCBI Taxonomy" id="1140"/>
    <lineage>
        <taxon>Bacteria</taxon>
        <taxon>Bacillati</taxon>
        <taxon>Cyanobacteriota</taxon>
        <taxon>Cyanophyceae</taxon>
        <taxon>Synechococcales</taxon>
        <taxon>Synechococcaceae</taxon>
        <taxon>Synechococcus</taxon>
    </lineage>
</organism>
<comment type="catalytic activity">
    <reaction evidence="1">
        <text>(6R)-10-formyltetrahydrofolate + 5-amino-1-(5-phospho-beta-D-ribosyl)imidazole-4-carboxamide = 5-formamido-1-(5-phospho-D-ribosyl)imidazole-4-carboxamide + (6S)-5,6,7,8-tetrahydrofolate</text>
        <dbReference type="Rhea" id="RHEA:22192"/>
        <dbReference type="ChEBI" id="CHEBI:57453"/>
        <dbReference type="ChEBI" id="CHEBI:58467"/>
        <dbReference type="ChEBI" id="CHEBI:58475"/>
        <dbReference type="ChEBI" id="CHEBI:195366"/>
        <dbReference type="EC" id="2.1.2.3"/>
    </reaction>
</comment>
<comment type="catalytic activity">
    <reaction evidence="1">
        <text>IMP + H2O = 5-formamido-1-(5-phospho-D-ribosyl)imidazole-4-carboxamide</text>
        <dbReference type="Rhea" id="RHEA:18445"/>
        <dbReference type="ChEBI" id="CHEBI:15377"/>
        <dbReference type="ChEBI" id="CHEBI:58053"/>
        <dbReference type="ChEBI" id="CHEBI:58467"/>
        <dbReference type="EC" id="3.5.4.10"/>
    </reaction>
</comment>
<comment type="pathway">
    <text evidence="1">Purine metabolism; IMP biosynthesis via de novo pathway; 5-formamido-1-(5-phospho-D-ribosyl)imidazole-4-carboxamide from 5-amino-1-(5-phospho-D-ribosyl)imidazole-4-carboxamide (10-formyl THF route): step 1/1.</text>
</comment>
<comment type="pathway">
    <text evidence="1">Purine metabolism; IMP biosynthesis via de novo pathway; IMP from 5-formamido-1-(5-phospho-D-ribosyl)imidazole-4-carboxamide: step 1/1.</text>
</comment>
<comment type="domain">
    <text evidence="1">The IMP cyclohydrolase activity resides in the N-terminal region.</text>
</comment>
<comment type="similarity">
    <text evidence="1">Belongs to the PurH family.</text>
</comment>
<reference key="1">
    <citation type="submission" date="2005-08" db="EMBL/GenBank/DDBJ databases">
        <title>Complete sequence of chromosome 1 of Synechococcus elongatus PCC 7942.</title>
        <authorList>
            <consortium name="US DOE Joint Genome Institute"/>
            <person name="Copeland A."/>
            <person name="Lucas S."/>
            <person name="Lapidus A."/>
            <person name="Barry K."/>
            <person name="Detter J.C."/>
            <person name="Glavina T."/>
            <person name="Hammon N."/>
            <person name="Israni S."/>
            <person name="Pitluck S."/>
            <person name="Schmutz J."/>
            <person name="Larimer F."/>
            <person name="Land M."/>
            <person name="Kyrpides N."/>
            <person name="Lykidis A."/>
            <person name="Golden S."/>
            <person name="Richardson P."/>
        </authorList>
    </citation>
    <scope>NUCLEOTIDE SEQUENCE [LARGE SCALE GENOMIC DNA]</scope>
    <source>
        <strain>ATCC 33912 / PCC 7942 / FACHB-805</strain>
    </source>
</reference>